<keyword id="KW-0067">ATP-binding</keyword>
<keyword id="KW-0119">Carbohydrate metabolism</keyword>
<keyword id="KW-0299">Galactose metabolism</keyword>
<keyword id="KW-0418">Kinase</keyword>
<keyword id="KW-0547">Nucleotide-binding</keyword>
<keyword id="KW-0808">Transferase</keyword>
<gene>
    <name evidence="1" type="primary">GAL1</name>
</gene>
<accession>P56091</accession>
<organism>
    <name type="scientific">Candida albicans</name>
    <name type="common">Yeast</name>
    <dbReference type="NCBI Taxonomy" id="5476"/>
    <lineage>
        <taxon>Eukaryota</taxon>
        <taxon>Fungi</taxon>
        <taxon>Dikarya</taxon>
        <taxon>Ascomycota</taxon>
        <taxon>Saccharomycotina</taxon>
        <taxon>Pichiomycetes</taxon>
        <taxon>Debaryomycetaceae</taxon>
        <taxon>Candida/Lodderomyces clade</taxon>
        <taxon>Candida</taxon>
    </lineage>
</organism>
<sequence>MSVPTFDDLSFYSNDQELTKSRYLKLVEIFQSNFPNASIDFFARSPGRVNLIGDHIDYNFFPVLPMAISADVIVAVNVNDEPEIVITHTDSKNFAKETIPLTNNNDGFEIDSQHHSWANYFKCALIVANNYLTEQNLKGQLKGMKLTFDGNVPTGGGLSSSAAFCVASTLAILHANGVKDITKADLTRITVVCEHYVGVNTGGMDQCASVYGEPDKALLIQFKPKLIGKPFKFPVENLTFVITNSLQVSNKHETAPIHYNLRVVEMAIAADVLVKKLNLGTLVPQDSNIGTSSLRGVMDAVFNTCKWDGNDIDVGIDQLKKMIAIVETELNNNQEGYTVDQCLTVLDLSLDEFKSKYLQAYPVKFDVLKLYQRAKHVYQESLRVLETLKLLSTTQTSSNSKDDDESFLVKFGELMNQSQSDLDKLNESSNDKLNKICSIALQNGSYGSRITGAGWGGSIVHLTTLDKSKQLIQGLIKNYYQLEFPSIKLDELLNDAIIDSKPSMGSCIVTTKFLQ</sequence>
<protein>
    <recommendedName>
        <fullName evidence="1">Galactokinase</fullName>
        <ecNumber evidence="1">2.7.1.6</ecNumber>
    </recommendedName>
    <alternativeName>
        <fullName evidence="1">Galactose kinase</fullName>
    </alternativeName>
</protein>
<evidence type="ECO:0000250" key="1">
    <source>
        <dbReference type="UniProtKB" id="P04385"/>
    </source>
</evidence>
<evidence type="ECO:0000250" key="2">
    <source>
        <dbReference type="UniProtKB" id="Q9HHB6"/>
    </source>
</evidence>
<evidence type="ECO:0000305" key="3"/>
<feature type="chain" id="PRO_0000184652" description="Galactokinase">
    <location>
        <begin position="1"/>
        <end position="515"/>
    </location>
</feature>
<feature type="active site" description="Proton acceptor" evidence="2">
    <location>
        <position position="205"/>
    </location>
</feature>
<feature type="binding site" evidence="1">
    <location>
        <position position="48"/>
    </location>
    <ligand>
        <name>alpha-D-galactose</name>
        <dbReference type="ChEBI" id="CHEBI:28061"/>
    </ligand>
</feature>
<feature type="binding site" evidence="1">
    <location>
        <position position="54"/>
    </location>
    <ligand>
        <name>alpha-D-galactose</name>
        <dbReference type="ChEBI" id="CHEBI:28061"/>
    </ligand>
</feature>
<feature type="binding site" evidence="1">
    <location>
        <position position="55"/>
    </location>
    <ligand>
        <name>alpha-D-galactose</name>
        <dbReference type="ChEBI" id="CHEBI:28061"/>
    </ligand>
</feature>
<feature type="binding site" evidence="1">
    <location>
        <position position="57"/>
    </location>
    <ligand>
        <name>alpha-D-galactose</name>
        <dbReference type="ChEBI" id="CHEBI:28061"/>
    </ligand>
</feature>
<feature type="binding site" evidence="1">
    <location>
        <position position="155"/>
    </location>
    <ligand>
        <name>ATP</name>
        <dbReference type="ChEBI" id="CHEBI:30616"/>
    </ligand>
</feature>
<feature type="binding site" evidence="1">
    <location>
        <position position="157"/>
    </location>
    <ligand>
        <name>ATP</name>
        <dbReference type="ChEBI" id="CHEBI:30616"/>
    </ligand>
</feature>
<feature type="binding site" evidence="1">
    <location>
        <position position="159"/>
    </location>
    <ligand>
        <name>ATP</name>
        <dbReference type="ChEBI" id="CHEBI:30616"/>
    </ligand>
</feature>
<feature type="binding site" evidence="1">
    <location>
        <position position="160"/>
    </location>
    <ligand>
        <name>ATP</name>
        <dbReference type="ChEBI" id="CHEBI:30616"/>
    </ligand>
</feature>
<feature type="binding site" evidence="1">
    <location>
        <position position="205"/>
    </location>
    <ligand>
        <name>alpha-D-galactose</name>
        <dbReference type="ChEBI" id="CHEBI:28061"/>
    </ligand>
</feature>
<feature type="binding site" evidence="1">
    <location>
        <position position="249"/>
    </location>
    <ligand>
        <name>ATP</name>
        <dbReference type="ChEBI" id="CHEBI:30616"/>
    </ligand>
</feature>
<feature type="binding site" evidence="1">
    <location>
        <position position="250"/>
    </location>
    <ligand>
        <name>ATP</name>
        <dbReference type="ChEBI" id="CHEBI:30616"/>
    </ligand>
</feature>
<feature type="binding site" evidence="1">
    <location>
        <position position="251"/>
    </location>
    <ligand>
        <name>ATP</name>
        <dbReference type="ChEBI" id="CHEBI:30616"/>
    </ligand>
</feature>
<feature type="binding site" evidence="1">
    <location>
        <position position="259"/>
    </location>
    <ligand>
        <name>alpha-D-galactose</name>
        <dbReference type="ChEBI" id="CHEBI:28061"/>
    </ligand>
</feature>
<feature type="site" description="Transition state stabilizer" evidence="2">
    <location>
        <position position="48"/>
    </location>
</feature>
<proteinExistence type="inferred from homology"/>
<reference key="1">
    <citation type="submission" date="1997-06" db="EMBL/GenBank/DDBJ databases">
        <authorList>
            <person name="Grindle S."/>
            <person name="Magee B.B."/>
            <person name="Gorman J.A."/>
        </authorList>
    </citation>
    <scope>NUCLEOTIDE SEQUENCE [GENOMIC DNA]</scope>
    <source>
        <strain>ATCC 11651 / B792 / 171D</strain>
    </source>
</reference>
<dbReference type="EC" id="2.7.1.6" evidence="1"/>
<dbReference type="EMBL" id="AF006591">
    <property type="protein sequence ID" value="AAB62568.1"/>
    <property type="molecule type" value="Genomic_DNA"/>
</dbReference>
<dbReference type="SMR" id="P56091"/>
<dbReference type="VEuPathDB" id="FungiDB:C1_02130C_A"/>
<dbReference type="VEuPathDB" id="FungiDB:CAWG_01170"/>
<dbReference type="UniPathway" id="UPA00214"/>
<dbReference type="GO" id="GO:0005829">
    <property type="term" value="C:cytosol"/>
    <property type="evidence" value="ECO:0007669"/>
    <property type="project" value="TreeGrafter"/>
</dbReference>
<dbReference type="GO" id="GO:0005524">
    <property type="term" value="F:ATP binding"/>
    <property type="evidence" value="ECO:0007669"/>
    <property type="project" value="UniProtKB-KW"/>
</dbReference>
<dbReference type="GO" id="GO:0004335">
    <property type="term" value="F:galactokinase activity"/>
    <property type="evidence" value="ECO:0007669"/>
    <property type="project" value="UniProtKB-EC"/>
</dbReference>
<dbReference type="GO" id="GO:0006012">
    <property type="term" value="P:galactose metabolic process"/>
    <property type="evidence" value="ECO:0007669"/>
    <property type="project" value="UniProtKB-UniPathway"/>
</dbReference>
<dbReference type="FunFam" id="1.20.1440.340:FF:000003">
    <property type="entry name" value="GAL1p Galactokinase"/>
    <property type="match status" value="1"/>
</dbReference>
<dbReference type="FunFam" id="3.30.230.10:FF:000056">
    <property type="entry name" value="GAL1p Galactokinase"/>
    <property type="match status" value="1"/>
</dbReference>
<dbReference type="Gene3D" id="1.20.1440.340">
    <property type="match status" value="1"/>
</dbReference>
<dbReference type="Gene3D" id="3.30.230.10">
    <property type="match status" value="1"/>
</dbReference>
<dbReference type="InterPro" id="IPR000705">
    <property type="entry name" value="Galactokinase"/>
</dbReference>
<dbReference type="InterPro" id="IPR019741">
    <property type="entry name" value="Galactokinase_CS"/>
</dbReference>
<dbReference type="InterPro" id="IPR019539">
    <property type="entry name" value="GalKase_N"/>
</dbReference>
<dbReference type="InterPro" id="IPR013750">
    <property type="entry name" value="GHMP_kinase_C_dom"/>
</dbReference>
<dbReference type="InterPro" id="IPR036554">
    <property type="entry name" value="GHMP_kinase_C_sf"/>
</dbReference>
<dbReference type="InterPro" id="IPR006204">
    <property type="entry name" value="GHMP_kinase_N_dom"/>
</dbReference>
<dbReference type="InterPro" id="IPR006203">
    <property type="entry name" value="GHMP_knse_ATP-bd_CS"/>
</dbReference>
<dbReference type="InterPro" id="IPR006206">
    <property type="entry name" value="Mevalonate/galactokinase"/>
</dbReference>
<dbReference type="InterPro" id="IPR020568">
    <property type="entry name" value="Ribosomal_Su5_D2-typ_SF"/>
</dbReference>
<dbReference type="InterPro" id="IPR014721">
    <property type="entry name" value="Ribsml_uS5_D2-typ_fold_subgr"/>
</dbReference>
<dbReference type="NCBIfam" id="TIGR00131">
    <property type="entry name" value="gal_kin"/>
    <property type="match status" value="1"/>
</dbReference>
<dbReference type="PANTHER" id="PTHR10457:SF7">
    <property type="entry name" value="GALACTOKINASE-RELATED"/>
    <property type="match status" value="1"/>
</dbReference>
<dbReference type="PANTHER" id="PTHR10457">
    <property type="entry name" value="MEVALONATE KINASE/GALACTOKINASE"/>
    <property type="match status" value="1"/>
</dbReference>
<dbReference type="Pfam" id="PF10509">
    <property type="entry name" value="GalKase_gal_bdg"/>
    <property type="match status" value="1"/>
</dbReference>
<dbReference type="Pfam" id="PF08544">
    <property type="entry name" value="GHMP_kinases_C"/>
    <property type="match status" value="1"/>
</dbReference>
<dbReference type="Pfam" id="PF00288">
    <property type="entry name" value="GHMP_kinases_N"/>
    <property type="match status" value="1"/>
</dbReference>
<dbReference type="PIRSF" id="PIRSF000530">
    <property type="entry name" value="Galactokinase"/>
    <property type="match status" value="1"/>
</dbReference>
<dbReference type="PRINTS" id="PR00473">
    <property type="entry name" value="GALCTOKINASE"/>
</dbReference>
<dbReference type="PRINTS" id="PR00959">
    <property type="entry name" value="MEVGALKINASE"/>
</dbReference>
<dbReference type="SUPFAM" id="SSF55060">
    <property type="entry name" value="GHMP Kinase, C-terminal domain"/>
    <property type="match status" value="1"/>
</dbReference>
<dbReference type="SUPFAM" id="SSF54211">
    <property type="entry name" value="Ribosomal protein S5 domain 2-like"/>
    <property type="match status" value="1"/>
</dbReference>
<dbReference type="PROSITE" id="PS00106">
    <property type="entry name" value="GALACTOKINASE"/>
    <property type="match status" value="1"/>
</dbReference>
<dbReference type="PROSITE" id="PS00627">
    <property type="entry name" value="GHMP_KINASES_ATP"/>
    <property type="match status" value="1"/>
</dbReference>
<comment type="function">
    <text evidence="1">Galactokinase is a key enzyme in the galactose metabolism where it catalyzes the conversion of alpha-D-galactose to galactose 1-phosphate (By similarity). Can also induce the transcription of the gal genes in response to the organism being challenged with galactose as the sole source of carbon (By similarity).</text>
</comment>
<comment type="catalytic activity">
    <reaction evidence="1">
        <text>alpha-D-galactose + ATP = alpha-D-galactose 1-phosphate + ADP + H(+)</text>
        <dbReference type="Rhea" id="RHEA:13553"/>
        <dbReference type="ChEBI" id="CHEBI:15378"/>
        <dbReference type="ChEBI" id="CHEBI:28061"/>
        <dbReference type="ChEBI" id="CHEBI:30616"/>
        <dbReference type="ChEBI" id="CHEBI:58336"/>
        <dbReference type="ChEBI" id="CHEBI:456216"/>
        <dbReference type="EC" id="2.7.1.6"/>
    </reaction>
    <physiologicalReaction direction="left-to-right" evidence="1">
        <dbReference type="Rhea" id="RHEA:13554"/>
    </physiologicalReaction>
</comment>
<comment type="pathway">
    <text evidence="1">Carbohydrate metabolism; galactose metabolism.</text>
</comment>
<comment type="similarity">
    <text evidence="3">Belongs to the GHMP kinase family. GalK subfamily.</text>
</comment>
<name>GAL1_CANAX</name>